<gene>
    <name type="primary">MT-CYB</name>
    <name type="synonym">COB</name>
    <name type="synonym">CYTB</name>
    <name type="synonym">MTCYB</name>
</gene>
<geneLocation type="mitochondrion"/>
<sequence>MTNIRKSHPLLKIINHSFIDLPTPSNISSWWNFGSLLGICLILQIATGLFLAMHYTSDTTTAFSSVTHICRDVNYGWLIRYLHANGASMFFICLFIHVGRGMYYGSYMSMETWNMGIILLFAVMATAFMGYVLPWGQMSFWGATVITNLLSAIPYIGTTLVEWIWGGFSVDKATLTRFFAFHFILPFIIVALVMVHLLFLHETGSNNPSGLNSDADKIPFHPYYTIKDILGILLLFLFLISLVLFSPDLLGDPDNYTPANPLNTPPHIKPEWYFLFAYAILRSIPNKLGGVLALILSILVLALLPHLHTSKLQSLMFRPLTQTLYWILVADLLTLTWIGGQPVEYPFVIIGQLASVLYFAIILIFMPMAGMIEDNMLKMD</sequence>
<name>CYB_ELIMI</name>
<accession>Q9T7S2</accession>
<comment type="function">
    <text evidence="2">Component of the ubiquinol-cytochrome c reductase complex (complex III or cytochrome b-c1 complex) that is part of the mitochondrial respiratory chain. The b-c1 complex mediates electron transfer from ubiquinol to cytochrome c. Contributes to the generation of a proton gradient across the mitochondrial membrane that is then used for ATP synthesis.</text>
</comment>
<comment type="cofactor">
    <cofactor evidence="2">
        <name>heme b</name>
        <dbReference type="ChEBI" id="CHEBI:60344"/>
    </cofactor>
    <text evidence="2">Binds 2 heme b groups non-covalently.</text>
</comment>
<comment type="subunit">
    <text evidence="2">The cytochrome bc1 complex contains 11 subunits: 3 respiratory subunits (MT-CYB, CYC1 and UQCRFS1), 2 core proteins (UQCRC1 and UQCRC2) and 6 low-molecular weight proteins (UQCRH/QCR6, UQCRB/QCR7, UQCRQ/QCR8, UQCR10/QCR9, UQCR11/QCR10 and a cleavage product of UQCRFS1). This cytochrome bc1 complex then forms a dimer.</text>
</comment>
<comment type="subcellular location">
    <subcellularLocation>
        <location evidence="2">Mitochondrion inner membrane</location>
        <topology evidence="2">Multi-pass membrane protein</topology>
    </subcellularLocation>
</comment>
<comment type="miscellaneous">
    <text evidence="1">Heme 1 (or BL or b562) is low-potential and absorbs at about 562 nm, and heme 2 (or BH or b566) is high-potential and absorbs at about 566 nm.</text>
</comment>
<comment type="similarity">
    <text evidence="3 4">Belongs to the cytochrome b family.</text>
</comment>
<comment type="caution">
    <text evidence="2">The full-length protein contains only eight transmembrane helices, not nine as predicted by bioinformatics tools.</text>
</comment>
<organism>
    <name type="scientific">Eliurus minor</name>
    <name type="common">Lesser tufted-tailed rat</name>
    <dbReference type="NCBI Taxonomy" id="107284"/>
    <lineage>
        <taxon>Eukaryota</taxon>
        <taxon>Metazoa</taxon>
        <taxon>Chordata</taxon>
        <taxon>Craniata</taxon>
        <taxon>Vertebrata</taxon>
        <taxon>Euteleostomi</taxon>
        <taxon>Mammalia</taxon>
        <taxon>Eutheria</taxon>
        <taxon>Euarchontoglires</taxon>
        <taxon>Glires</taxon>
        <taxon>Rodentia</taxon>
        <taxon>Myomorpha</taxon>
        <taxon>Muroidea</taxon>
        <taxon>Nesomyidae</taxon>
        <taxon>Nesomyinae</taxon>
        <taxon>Eliurus</taxon>
    </lineage>
</organism>
<keyword id="KW-0249">Electron transport</keyword>
<keyword id="KW-0349">Heme</keyword>
<keyword id="KW-0408">Iron</keyword>
<keyword id="KW-0472">Membrane</keyword>
<keyword id="KW-0479">Metal-binding</keyword>
<keyword id="KW-0496">Mitochondrion</keyword>
<keyword id="KW-0999">Mitochondrion inner membrane</keyword>
<keyword id="KW-0679">Respiratory chain</keyword>
<keyword id="KW-0812">Transmembrane</keyword>
<keyword id="KW-1133">Transmembrane helix</keyword>
<keyword id="KW-0813">Transport</keyword>
<keyword id="KW-0830">Ubiquinone</keyword>
<protein>
    <recommendedName>
        <fullName>Cytochrome b</fullName>
    </recommendedName>
    <alternativeName>
        <fullName>Complex III subunit 3</fullName>
    </alternativeName>
    <alternativeName>
        <fullName>Complex III subunit III</fullName>
    </alternativeName>
    <alternativeName>
        <fullName>Cytochrome b-c1 complex subunit 3</fullName>
    </alternativeName>
    <alternativeName>
        <fullName>Ubiquinol-cytochrome-c reductase complex cytochrome b subunit</fullName>
    </alternativeName>
</protein>
<reference key="1">
    <citation type="journal article" date="1999" name="Cladistics">
        <title>Molecular phylogeny and biogeography of Madagascar's native rodents (Muridae: Nesomyinae): a test of the single origin hypothesis.</title>
        <authorList>
            <person name="Jansa S.A."/>
            <person name="Goodman S.M."/>
            <person name="Tucker P.K."/>
        </authorList>
    </citation>
    <scope>NUCLEOTIDE SEQUENCE [GENOMIC DNA]</scope>
    <source>
        <strain>Isolate Emin464</strain>
    </source>
</reference>
<proteinExistence type="inferred from homology"/>
<feature type="chain" id="PRO_0000060913" description="Cytochrome b">
    <location>
        <begin position="1"/>
        <end position="380"/>
    </location>
</feature>
<feature type="transmembrane region" description="Helical" evidence="2">
    <location>
        <begin position="33"/>
        <end position="53"/>
    </location>
</feature>
<feature type="transmembrane region" description="Helical" evidence="2">
    <location>
        <begin position="77"/>
        <end position="98"/>
    </location>
</feature>
<feature type="transmembrane region" description="Helical" evidence="2">
    <location>
        <begin position="113"/>
        <end position="133"/>
    </location>
</feature>
<feature type="transmembrane region" description="Helical" evidence="2">
    <location>
        <begin position="178"/>
        <end position="198"/>
    </location>
</feature>
<feature type="transmembrane region" description="Helical" evidence="2">
    <location>
        <begin position="226"/>
        <end position="246"/>
    </location>
</feature>
<feature type="transmembrane region" description="Helical" evidence="2">
    <location>
        <begin position="288"/>
        <end position="308"/>
    </location>
</feature>
<feature type="transmembrane region" description="Helical" evidence="2">
    <location>
        <begin position="320"/>
        <end position="340"/>
    </location>
</feature>
<feature type="transmembrane region" description="Helical" evidence="2">
    <location>
        <begin position="347"/>
        <end position="367"/>
    </location>
</feature>
<feature type="binding site" description="axial binding residue" evidence="2">
    <location>
        <position position="83"/>
    </location>
    <ligand>
        <name>heme b</name>
        <dbReference type="ChEBI" id="CHEBI:60344"/>
        <label>b562</label>
    </ligand>
    <ligandPart>
        <name>Fe</name>
        <dbReference type="ChEBI" id="CHEBI:18248"/>
    </ligandPart>
</feature>
<feature type="binding site" description="axial binding residue" evidence="2">
    <location>
        <position position="97"/>
    </location>
    <ligand>
        <name>heme b</name>
        <dbReference type="ChEBI" id="CHEBI:60344"/>
        <label>b566</label>
    </ligand>
    <ligandPart>
        <name>Fe</name>
        <dbReference type="ChEBI" id="CHEBI:18248"/>
    </ligandPart>
</feature>
<feature type="binding site" description="axial binding residue" evidence="2">
    <location>
        <position position="182"/>
    </location>
    <ligand>
        <name>heme b</name>
        <dbReference type="ChEBI" id="CHEBI:60344"/>
        <label>b562</label>
    </ligand>
    <ligandPart>
        <name>Fe</name>
        <dbReference type="ChEBI" id="CHEBI:18248"/>
    </ligandPart>
</feature>
<feature type="binding site" description="axial binding residue" evidence="2">
    <location>
        <position position="196"/>
    </location>
    <ligand>
        <name>heme b</name>
        <dbReference type="ChEBI" id="CHEBI:60344"/>
        <label>b566</label>
    </ligand>
    <ligandPart>
        <name>Fe</name>
        <dbReference type="ChEBI" id="CHEBI:18248"/>
    </ligandPart>
</feature>
<feature type="binding site" evidence="2">
    <location>
        <position position="201"/>
    </location>
    <ligand>
        <name>a ubiquinone</name>
        <dbReference type="ChEBI" id="CHEBI:16389"/>
    </ligand>
</feature>
<dbReference type="EMBL" id="AF160545">
    <property type="protein sequence ID" value="AAF15161.1"/>
    <property type="molecule type" value="Genomic_DNA"/>
</dbReference>
<dbReference type="SMR" id="Q9T7S2"/>
<dbReference type="GO" id="GO:0005743">
    <property type="term" value="C:mitochondrial inner membrane"/>
    <property type="evidence" value="ECO:0007669"/>
    <property type="project" value="UniProtKB-SubCell"/>
</dbReference>
<dbReference type="GO" id="GO:0045275">
    <property type="term" value="C:respiratory chain complex III"/>
    <property type="evidence" value="ECO:0007669"/>
    <property type="project" value="InterPro"/>
</dbReference>
<dbReference type="GO" id="GO:0046872">
    <property type="term" value="F:metal ion binding"/>
    <property type="evidence" value="ECO:0007669"/>
    <property type="project" value="UniProtKB-KW"/>
</dbReference>
<dbReference type="GO" id="GO:0008121">
    <property type="term" value="F:ubiquinol-cytochrome-c reductase activity"/>
    <property type="evidence" value="ECO:0007669"/>
    <property type="project" value="InterPro"/>
</dbReference>
<dbReference type="GO" id="GO:0006122">
    <property type="term" value="P:mitochondrial electron transport, ubiquinol to cytochrome c"/>
    <property type="evidence" value="ECO:0007669"/>
    <property type="project" value="TreeGrafter"/>
</dbReference>
<dbReference type="CDD" id="cd00290">
    <property type="entry name" value="cytochrome_b_C"/>
    <property type="match status" value="1"/>
</dbReference>
<dbReference type="CDD" id="cd00284">
    <property type="entry name" value="Cytochrome_b_N"/>
    <property type="match status" value="1"/>
</dbReference>
<dbReference type="FunFam" id="1.20.810.10:FF:000002">
    <property type="entry name" value="Cytochrome b"/>
    <property type="match status" value="1"/>
</dbReference>
<dbReference type="Gene3D" id="1.20.810.10">
    <property type="entry name" value="Cytochrome Bc1 Complex, Chain C"/>
    <property type="match status" value="1"/>
</dbReference>
<dbReference type="InterPro" id="IPR005798">
    <property type="entry name" value="Cyt_b/b6_C"/>
</dbReference>
<dbReference type="InterPro" id="IPR036150">
    <property type="entry name" value="Cyt_b/b6_C_sf"/>
</dbReference>
<dbReference type="InterPro" id="IPR005797">
    <property type="entry name" value="Cyt_b/b6_N"/>
</dbReference>
<dbReference type="InterPro" id="IPR027387">
    <property type="entry name" value="Cytb/b6-like_sf"/>
</dbReference>
<dbReference type="InterPro" id="IPR030689">
    <property type="entry name" value="Cytochrome_b"/>
</dbReference>
<dbReference type="InterPro" id="IPR048260">
    <property type="entry name" value="Cytochrome_b_C_euk/bac"/>
</dbReference>
<dbReference type="InterPro" id="IPR048259">
    <property type="entry name" value="Cytochrome_b_N_euk/bac"/>
</dbReference>
<dbReference type="InterPro" id="IPR016174">
    <property type="entry name" value="Di-haem_cyt_TM"/>
</dbReference>
<dbReference type="PANTHER" id="PTHR19271">
    <property type="entry name" value="CYTOCHROME B"/>
    <property type="match status" value="1"/>
</dbReference>
<dbReference type="PANTHER" id="PTHR19271:SF16">
    <property type="entry name" value="CYTOCHROME B"/>
    <property type="match status" value="1"/>
</dbReference>
<dbReference type="Pfam" id="PF00032">
    <property type="entry name" value="Cytochrom_B_C"/>
    <property type="match status" value="1"/>
</dbReference>
<dbReference type="Pfam" id="PF00033">
    <property type="entry name" value="Cytochrome_B"/>
    <property type="match status" value="1"/>
</dbReference>
<dbReference type="PIRSF" id="PIRSF038885">
    <property type="entry name" value="COB"/>
    <property type="match status" value="1"/>
</dbReference>
<dbReference type="SUPFAM" id="SSF81648">
    <property type="entry name" value="a domain/subunit of cytochrome bc1 complex (Ubiquinol-cytochrome c reductase)"/>
    <property type="match status" value="1"/>
</dbReference>
<dbReference type="SUPFAM" id="SSF81342">
    <property type="entry name" value="Transmembrane di-heme cytochromes"/>
    <property type="match status" value="1"/>
</dbReference>
<dbReference type="PROSITE" id="PS51003">
    <property type="entry name" value="CYTB_CTER"/>
    <property type="match status" value="1"/>
</dbReference>
<dbReference type="PROSITE" id="PS51002">
    <property type="entry name" value="CYTB_NTER"/>
    <property type="match status" value="1"/>
</dbReference>
<evidence type="ECO:0000250" key="1"/>
<evidence type="ECO:0000250" key="2">
    <source>
        <dbReference type="UniProtKB" id="P00157"/>
    </source>
</evidence>
<evidence type="ECO:0000255" key="3">
    <source>
        <dbReference type="PROSITE-ProRule" id="PRU00967"/>
    </source>
</evidence>
<evidence type="ECO:0000255" key="4">
    <source>
        <dbReference type="PROSITE-ProRule" id="PRU00968"/>
    </source>
</evidence>